<proteinExistence type="inferred from homology"/>
<organism>
    <name type="scientific">Sus scrofa</name>
    <name type="common">Pig</name>
    <dbReference type="NCBI Taxonomy" id="9823"/>
    <lineage>
        <taxon>Eukaryota</taxon>
        <taxon>Metazoa</taxon>
        <taxon>Chordata</taxon>
        <taxon>Craniata</taxon>
        <taxon>Vertebrata</taxon>
        <taxon>Euteleostomi</taxon>
        <taxon>Mammalia</taxon>
        <taxon>Eutheria</taxon>
        <taxon>Laurasiatheria</taxon>
        <taxon>Artiodactyla</taxon>
        <taxon>Suina</taxon>
        <taxon>Suidae</taxon>
        <taxon>Sus</taxon>
    </lineage>
</organism>
<feature type="chain" id="PRO_0000412570" description="DnaJ homolog subfamily C member 5B">
    <location>
        <begin position="1"/>
        <end position="199"/>
    </location>
</feature>
<feature type="domain" description="J" evidence="3">
    <location>
        <begin position="19"/>
        <end position="84"/>
    </location>
</feature>
<feature type="modified residue" description="Phosphoserine" evidence="2">
    <location>
        <position position="14"/>
    </location>
</feature>
<feature type="modified residue" description="Phosphoserine" evidence="2">
    <location>
        <position position="16"/>
    </location>
</feature>
<gene>
    <name type="primary">DNAJC5B</name>
</gene>
<dbReference type="EMBL" id="CU550675">
    <property type="status" value="NOT_ANNOTATED_CDS"/>
    <property type="molecule type" value="Genomic_DNA"/>
</dbReference>
<dbReference type="RefSeq" id="NP_001193330.1">
    <property type="nucleotide sequence ID" value="NM_001206401.1"/>
</dbReference>
<dbReference type="RefSeq" id="XP_005663107.1">
    <property type="nucleotide sequence ID" value="XM_005663050.2"/>
</dbReference>
<dbReference type="RefSeq" id="XP_005663108.1">
    <property type="nucleotide sequence ID" value="XM_005663051.2"/>
</dbReference>
<dbReference type="RefSeq" id="XP_005663109.1">
    <property type="nucleotide sequence ID" value="XM_005663052.2"/>
</dbReference>
<dbReference type="SMR" id="F1RTY8"/>
<dbReference type="FunCoup" id="F1RTY8">
    <property type="interactions" value="159"/>
</dbReference>
<dbReference type="STRING" id="9823.ENSSSCP00000006628"/>
<dbReference type="PaxDb" id="9823-ENSSSCP00000006628"/>
<dbReference type="Ensembl" id="ENSSSCT00000006813.3">
    <property type="protein sequence ID" value="ENSSSCP00000006628.1"/>
    <property type="gene ID" value="ENSSSCG00000006217.3"/>
</dbReference>
<dbReference type="Ensembl" id="ENSSSCT00015020479.1">
    <property type="protein sequence ID" value="ENSSSCP00015008035.1"/>
    <property type="gene ID" value="ENSSSCG00015015458.1"/>
</dbReference>
<dbReference type="Ensembl" id="ENSSSCT00025001587.1">
    <property type="protein sequence ID" value="ENSSSCP00025000496.1"/>
    <property type="gene ID" value="ENSSSCG00025001266.1"/>
</dbReference>
<dbReference type="Ensembl" id="ENSSSCT00030045393.1">
    <property type="protein sequence ID" value="ENSSSCP00030020415.1"/>
    <property type="gene ID" value="ENSSSCG00030032829.1"/>
</dbReference>
<dbReference type="Ensembl" id="ENSSSCT00035021541.1">
    <property type="protein sequence ID" value="ENSSSCP00035007827.1"/>
    <property type="gene ID" value="ENSSSCG00035016807.1"/>
</dbReference>
<dbReference type="Ensembl" id="ENSSSCT00040040495.1">
    <property type="protein sequence ID" value="ENSSSCP00040016974.1"/>
    <property type="gene ID" value="ENSSSCG00040030110.1"/>
</dbReference>
<dbReference type="Ensembl" id="ENSSSCT00045018194.1">
    <property type="protein sequence ID" value="ENSSSCP00045012538.1"/>
    <property type="gene ID" value="ENSSSCG00045010712.1"/>
</dbReference>
<dbReference type="Ensembl" id="ENSSSCT00050022740.1">
    <property type="protein sequence ID" value="ENSSSCP00050009628.1"/>
    <property type="gene ID" value="ENSSSCG00050016681.1"/>
</dbReference>
<dbReference type="Ensembl" id="ENSSSCT00055021498.1">
    <property type="protein sequence ID" value="ENSSSCP00055017033.1"/>
    <property type="gene ID" value="ENSSSCG00055010946.1"/>
</dbReference>
<dbReference type="Ensembl" id="ENSSSCT00060069487.1">
    <property type="protein sequence ID" value="ENSSSCP00060029919.1"/>
    <property type="gene ID" value="ENSSSCG00060051068.1"/>
</dbReference>
<dbReference type="Ensembl" id="ENSSSCT00065093583.1">
    <property type="protein sequence ID" value="ENSSSCP00065040949.1"/>
    <property type="gene ID" value="ENSSSCG00065068165.1"/>
</dbReference>
<dbReference type="Ensembl" id="ENSSSCT00070040867.1">
    <property type="protein sequence ID" value="ENSSSCP00070034297.1"/>
    <property type="gene ID" value="ENSSSCG00070020561.1"/>
</dbReference>
<dbReference type="Ensembl" id="ENSSSCT00115023600">
    <property type="protein sequence ID" value="ENSSSCP00115022375"/>
    <property type="gene ID" value="ENSSSCG00115013609"/>
</dbReference>
<dbReference type="GeneID" id="100157247"/>
<dbReference type="KEGG" id="ssc:100157247"/>
<dbReference type="CTD" id="85479"/>
<dbReference type="VGNC" id="VGNC:98781">
    <property type="gene designation" value="DNAJC5B"/>
</dbReference>
<dbReference type="eggNOG" id="KOG0716">
    <property type="taxonomic scope" value="Eukaryota"/>
</dbReference>
<dbReference type="GeneTree" id="ENSGT00940000159294"/>
<dbReference type="HOGENOM" id="CLU_017633_14_1_1"/>
<dbReference type="InParanoid" id="F1RTY8"/>
<dbReference type="OMA" id="STWWAKA"/>
<dbReference type="OrthoDB" id="445556at2759"/>
<dbReference type="TreeFam" id="TF105164"/>
<dbReference type="Proteomes" id="UP000008227">
    <property type="component" value="Chromosome 4"/>
</dbReference>
<dbReference type="Proteomes" id="UP000314985">
    <property type="component" value="Chromosome 4"/>
</dbReference>
<dbReference type="Proteomes" id="UP000694570">
    <property type="component" value="Unplaced"/>
</dbReference>
<dbReference type="Proteomes" id="UP000694571">
    <property type="component" value="Unplaced"/>
</dbReference>
<dbReference type="Proteomes" id="UP000694720">
    <property type="component" value="Unplaced"/>
</dbReference>
<dbReference type="Proteomes" id="UP000694722">
    <property type="component" value="Unplaced"/>
</dbReference>
<dbReference type="Proteomes" id="UP000694723">
    <property type="component" value="Unplaced"/>
</dbReference>
<dbReference type="Proteomes" id="UP000694724">
    <property type="component" value="Unplaced"/>
</dbReference>
<dbReference type="Proteomes" id="UP000694725">
    <property type="component" value="Unplaced"/>
</dbReference>
<dbReference type="Proteomes" id="UP000694726">
    <property type="component" value="Unplaced"/>
</dbReference>
<dbReference type="Proteomes" id="UP000694727">
    <property type="component" value="Unplaced"/>
</dbReference>
<dbReference type="Proteomes" id="UP000694728">
    <property type="component" value="Unplaced"/>
</dbReference>
<dbReference type="Bgee" id="ENSSSCG00000006217">
    <property type="expression patterns" value="Expressed in testis and 15 other cell types or tissues"/>
</dbReference>
<dbReference type="GO" id="GO:0005737">
    <property type="term" value="C:cytoplasm"/>
    <property type="evidence" value="ECO:0007669"/>
    <property type="project" value="UniProtKB-ARBA"/>
</dbReference>
<dbReference type="GO" id="GO:0016020">
    <property type="term" value="C:membrane"/>
    <property type="evidence" value="ECO:0007669"/>
    <property type="project" value="UniProtKB-SubCell"/>
</dbReference>
<dbReference type="CDD" id="cd06257">
    <property type="entry name" value="DnaJ"/>
    <property type="match status" value="1"/>
</dbReference>
<dbReference type="FunFam" id="1.10.287.110:FF:000017">
    <property type="entry name" value="dnaJ homolog subfamily C member 5"/>
    <property type="match status" value="1"/>
</dbReference>
<dbReference type="Gene3D" id="1.10.287.110">
    <property type="entry name" value="DnaJ domain"/>
    <property type="match status" value="1"/>
</dbReference>
<dbReference type="InterPro" id="IPR051434">
    <property type="entry name" value="DnaJ_C_subfamily_member5"/>
</dbReference>
<dbReference type="InterPro" id="IPR001623">
    <property type="entry name" value="DnaJ_domain"/>
</dbReference>
<dbReference type="InterPro" id="IPR036869">
    <property type="entry name" value="J_dom_sf"/>
</dbReference>
<dbReference type="PANTHER" id="PTHR44027">
    <property type="entry name" value="DNAJ HOMOLOG SUBFAMILY C MEMBER 5 HOMOLOG"/>
    <property type="match status" value="1"/>
</dbReference>
<dbReference type="PANTHER" id="PTHR44027:SF6">
    <property type="entry name" value="DNAJ HOMOLOG SUBFAMILY C MEMBER 5B"/>
    <property type="match status" value="1"/>
</dbReference>
<dbReference type="Pfam" id="PF00226">
    <property type="entry name" value="DnaJ"/>
    <property type="match status" value="1"/>
</dbReference>
<dbReference type="PRINTS" id="PR00625">
    <property type="entry name" value="JDOMAIN"/>
</dbReference>
<dbReference type="SMART" id="SM00271">
    <property type="entry name" value="DnaJ"/>
    <property type="match status" value="1"/>
</dbReference>
<dbReference type="SUPFAM" id="SSF46565">
    <property type="entry name" value="Chaperone J-domain"/>
    <property type="match status" value="1"/>
</dbReference>
<dbReference type="PROSITE" id="PS50076">
    <property type="entry name" value="DNAJ_2"/>
    <property type="match status" value="1"/>
</dbReference>
<reference key="1">
    <citation type="submission" date="2009-11" db="EMBL/GenBank/DDBJ databases">
        <authorList>
            <consortium name="Porcine genome sequencing project"/>
        </authorList>
    </citation>
    <scope>NUCLEOTIDE SEQUENCE [LARGE SCALE GENOMIC DNA]</scope>
</reference>
<comment type="subunit">
    <text evidence="1">Interacts with the chaperone complex consisting of HSC70 and SGTA.</text>
</comment>
<comment type="subcellular location">
    <subcellularLocation>
        <location evidence="1">Membrane</location>
        <topology>Lipid-anchor</topology>
    </subcellularLocation>
</comment>
<comment type="PTM">
    <text evidence="1">Palmitoylated.</text>
</comment>
<name>DNJ5B_PIG</name>
<accession>F1RTY8</accession>
<keyword id="KW-0143">Chaperone</keyword>
<keyword id="KW-0449">Lipoprotein</keyword>
<keyword id="KW-0472">Membrane</keyword>
<keyword id="KW-0564">Palmitate</keyword>
<keyword id="KW-0597">Phosphoprotein</keyword>
<keyword id="KW-1185">Reference proteome</keyword>
<sequence>MACNIPNERQRTMSTSGEALYEILGLHKGASNEEIKKTYRKLALKHHPDKNPDDPGAAEKFKEINNAHTILTDMSKRNIYDKYGSLGLYVAEQFGEENVNTYFMLSSWWAKTLFVIIGLLTGCYFCCCLCCCCNCCCGRCRPKSSMPGEDFYVSPEDLEEQIKTDMEQDMDFPVILQPTNANEKTQLIREGPRSYCTDS</sequence>
<evidence type="ECO:0000250" key="1"/>
<evidence type="ECO:0000250" key="2">
    <source>
        <dbReference type="UniProtKB" id="D3ZD82"/>
    </source>
</evidence>
<evidence type="ECO:0000255" key="3">
    <source>
        <dbReference type="PROSITE-ProRule" id="PRU00286"/>
    </source>
</evidence>
<protein>
    <recommendedName>
        <fullName>DnaJ homolog subfamily C member 5B</fullName>
    </recommendedName>
    <alternativeName>
        <fullName>Cysteine string protein beta</fullName>
        <shortName>CSP-beta</shortName>
    </alternativeName>
</protein>